<feature type="signal peptide" evidence="3">
    <location>
        <begin position="1"/>
        <end position="23"/>
    </location>
</feature>
<feature type="chain" id="PRO_0000043101" description="Teichoic acid D-alanine hydrolase">
    <location>
        <begin position="24"/>
        <end position="397"/>
    </location>
</feature>
<dbReference type="EC" id="3.1.1.103" evidence="2"/>
<dbReference type="EMBL" id="BA000018">
    <property type="protein sequence ID" value="BAB42154.1"/>
    <property type="molecule type" value="Genomic_DNA"/>
</dbReference>
<dbReference type="PIR" id="G89874">
    <property type="entry name" value="G89874"/>
</dbReference>
<dbReference type="RefSeq" id="WP_000671245.1">
    <property type="nucleotide sequence ID" value="NC_002745.2"/>
</dbReference>
<dbReference type="SMR" id="Q7A6A2"/>
<dbReference type="MEROPS" id="S12.006"/>
<dbReference type="EnsemblBacteria" id="BAB42154">
    <property type="protein sequence ID" value="BAB42154"/>
    <property type="gene ID" value="BAB42154"/>
</dbReference>
<dbReference type="KEGG" id="sau:SA0909"/>
<dbReference type="HOGENOM" id="CLU_020027_0_0_9"/>
<dbReference type="GO" id="GO:0005886">
    <property type="term" value="C:plasma membrane"/>
    <property type="evidence" value="ECO:0007669"/>
    <property type="project" value="UniProtKB-SubCell"/>
</dbReference>
<dbReference type="GO" id="GO:0016787">
    <property type="term" value="F:hydrolase activity"/>
    <property type="evidence" value="ECO:0007669"/>
    <property type="project" value="UniProtKB-KW"/>
</dbReference>
<dbReference type="GO" id="GO:0071555">
    <property type="term" value="P:cell wall organization"/>
    <property type="evidence" value="ECO:0007669"/>
    <property type="project" value="UniProtKB-KW"/>
</dbReference>
<dbReference type="GO" id="GO:0046677">
    <property type="term" value="P:response to antibiotic"/>
    <property type="evidence" value="ECO:0007669"/>
    <property type="project" value="UniProtKB-KW"/>
</dbReference>
<dbReference type="FunFam" id="3.40.710.10:FF:000040">
    <property type="entry name" value="Methicillin resistance protein FmtA"/>
    <property type="match status" value="1"/>
</dbReference>
<dbReference type="Gene3D" id="3.40.710.10">
    <property type="entry name" value="DD-peptidase/beta-lactamase superfamily"/>
    <property type="match status" value="1"/>
</dbReference>
<dbReference type="InterPro" id="IPR050491">
    <property type="entry name" value="Bact_CellWall_Synth/Modif"/>
</dbReference>
<dbReference type="InterPro" id="IPR001466">
    <property type="entry name" value="Beta-lactam-related"/>
</dbReference>
<dbReference type="InterPro" id="IPR012338">
    <property type="entry name" value="Beta-lactam/transpept-like"/>
</dbReference>
<dbReference type="PANTHER" id="PTHR46825">
    <property type="entry name" value="D-ALANYL-D-ALANINE-CARBOXYPEPTIDASE/ENDOPEPTIDASE AMPH"/>
    <property type="match status" value="1"/>
</dbReference>
<dbReference type="PANTHER" id="PTHR46825:SF11">
    <property type="entry name" value="PENICILLIN-BINDING PROTEIN 4"/>
    <property type="match status" value="1"/>
</dbReference>
<dbReference type="Pfam" id="PF00144">
    <property type="entry name" value="Beta-lactamase"/>
    <property type="match status" value="1"/>
</dbReference>
<dbReference type="SUPFAM" id="SSF56601">
    <property type="entry name" value="beta-lactamase/transpeptidase-like"/>
    <property type="match status" value="1"/>
</dbReference>
<accession>Q7A6A2</accession>
<comment type="function">
    <text evidence="2">Catalyzes the liberation of D-alanyl moieties present on wall teichoic acid (WTA) and lipoteichoic acid (LTA). Affects the methicillin resistance level and autolysis in the presence of Triton X-100 as well as the cell wall structure.</text>
</comment>
<comment type="catalytic activity">
    <reaction evidence="2">
        <text>[(4-D-Ala)-(2-GlcNAc)-Rib-ol-P]n-[Gro-P]m-beta-D-ManNAc-(1-&gt;4)-alpha-D-GlcNAc-P-peptidoglycan + n H2O = [(2-GlcNAc)-Rib-ol-P]n-[Gro-P]m-beta-D-ManNAc-(1-&gt;4)-alpha-D-GlcNAc-P-peptidoglycan + n D-alanine.</text>
        <dbReference type="EC" id="3.1.1.103"/>
    </reaction>
</comment>
<comment type="subcellular location">
    <subcellularLocation>
        <location evidence="1">Cell membrane</location>
        <topology evidence="1">Peripheral membrane protein</topology>
    </subcellularLocation>
</comment>
<evidence type="ECO:0000250" key="1"/>
<evidence type="ECO:0000250" key="2">
    <source>
        <dbReference type="UniProtKB" id="Q7A2T0"/>
    </source>
</evidence>
<evidence type="ECO:0000255" key="3"/>
<reference key="1">
    <citation type="journal article" date="2001" name="Lancet">
        <title>Whole genome sequencing of meticillin-resistant Staphylococcus aureus.</title>
        <authorList>
            <person name="Kuroda M."/>
            <person name="Ohta T."/>
            <person name="Uchiyama I."/>
            <person name="Baba T."/>
            <person name="Yuzawa H."/>
            <person name="Kobayashi I."/>
            <person name="Cui L."/>
            <person name="Oguchi A."/>
            <person name="Aoki K."/>
            <person name="Nagai Y."/>
            <person name="Lian J.-Q."/>
            <person name="Ito T."/>
            <person name="Kanamori M."/>
            <person name="Matsumaru H."/>
            <person name="Maruyama A."/>
            <person name="Murakami H."/>
            <person name="Hosoyama A."/>
            <person name="Mizutani-Ui Y."/>
            <person name="Takahashi N.K."/>
            <person name="Sawano T."/>
            <person name="Inoue R."/>
            <person name="Kaito C."/>
            <person name="Sekimizu K."/>
            <person name="Hirakawa H."/>
            <person name="Kuhara S."/>
            <person name="Goto S."/>
            <person name="Yabuzaki J."/>
            <person name="Kanehisa M."/>
            <person name="Yamashita A."/>
            <person name="Oshima K."/>
            <person name="Furuya K."/>
            <person name="Yoshino C."/>
            <person name="Shiba T."/>
            <person name="Hattori M."/>
            <person name="Ogasawara N."/>
            <person name="Hayashi H."/>
            <person name="Hiramatsu K."/>
        </authorList>
    </citation>
    <scope>NUCLEOTIDE SEQUENCE [LARGE SCALE GENOMIC DNA]</scope>
    <source>
        <strain>N315</strain>
    </source>
</reference>
<reference key="2">
    <citation type="submission" date="2007-10" db="UniProtKB">
        <title>Shotgun proteomic analysis of total and membrane protein extracts of S. aureus strain N315.</title>
        <authorList>
            <person name="Vaezzadeh A.R."/>
            <person name="Deshusses J."/>
            <person name="Lescuyer P."/>
            <person name="Hochstrasser D.F."/>
        </authorList>
    </citation>
    <scope>IDENTIFICATION BY MASS SPECTROMETRY [LARGE SCALE ANALYSIS]</scope>
    <source>
        <strain>N315</strain>
    </source>
</reference>
<sequence>MKFNKVKLVIHACVLLFIIISIALIFHRLQTKTHSIDPIHKETKLSDNEKYLVDRNKEKVAPSKLKEVYNSKDPKYKKIDKYLQSSLFNGSVAIYENGKLKMSKGYGYQDFEKGIKNTPNTMFLIGSAQKFSTGLLLKQLEEEHKININDPVSKYLPWFKTSKPIPLKDLMLHQSGLYKYKSSKDYKNLDQAVKAIQKRGIDPKKYKKHMYNDGNYLVLAKVIEEVTGKSYAENYYTKIGDPLKLQHTAFYDEQPFKKYLAKGYAYNSTGLSFLRPNILDQYYGAGNLYMTPTDMGKLITQIQQYKLFSPKITNPLLHEFGTKQYPDEYRYGFYAKPTLNRLNGGFFGQVFTVYYNDKYVVVLALNVKGNNEVRIKHIYNDILKQNKPYNTKGVIVQ</sequence>
<gene>
    <name type="primary">fmtA</name>
    <name type="synonym">fmt</name>
    <name type="ordered locus">SA0909</name>
</gene>
<organism>
    <name type="scientific">Staphylococcus aureus (strain N315)</name>
    <dbReference type="NCBI Taxonomy" id="158879"/>
    <lineage>
        <taxon>Bacteria</taxon>
        <taxon>Bacillati</taxon>
        <taxon>Bacillota</taxon>
        <taxon>Bacilli</taxon>
        <taxon>Bacillales</taxon>
        <taxon>Staphylococcaceae</taxon>
        <taxon>Staphylococcus</taxon>
    </lineage>
</organism>
<keyword id="KW-0046">Antibiotic resistance</keyword>
<keyword id="KW-1003">Cell membrane</keyword>
<keyword id="KW-0961">Cell wall biogenesis/degradation</keyword>
<keyword id="KW-0378">Hydrolase</keyword>
<keyword id="KW-0472">Membrane</keyword>
<keyword id="KW-0732">Signal</keyword>
<name>FMTA_STAAN</name>
<protein>
    <recommendedName>
        <fullName>Teichoic acid D-alanine hydrolase</fullName>
        <ecNumber evidence="2">3.1.1.103</ecNumber>
    </recommendedName>
    <alternativeName>
        <fullName>Teichoic acid D-alanine esterase</fullName>
    </alternativeName>
</protein>
<proteinExistence type="evidence at protein level"/>